<comment type="function">
    <text evidence="1">Plays a major role in the induction and maintenance of cellular transformation. Acts mainly as an oncoprotein by stimulating the destruction of many host cell key regulatory proteins. E6 associates with host UBE3A/E6-AP ubiquitin-protein ligase, and inactivates tumor suppressors TP53 and TP73 by targeting them to the 26S proteasome for degradation. In turn, DNA damage and chromosomal instabilities increase and lead to cell proliferation and cancer development. The complex E6/E6AP targets several other substrates to degradation via the proteasome including host DLG1 or NFX1, a repressor of human telomerase reverse transcriptase (hTERT). The resulting increased expression of hTERT prevents the shortening of telomere length leading to cell immortalization. Other cellular targets including BAK1, Fas-associated death domain-containing protein (FADD) and procaspase 8, are degraded by E6/E6AP causing inhibition of apoptosis. E6 also inhibits immune response by interacting with host IRF3 and TYK2. These interactions prevent IRF3 transcriptional activities and inhibit TYK2-mediated JAK-STAT activation by interferon alpha resulting in inhibition of the interferon signaling pathway.</text>
</comment>
<comment type="subunit">
    <text evidence="1">Forms homodimers. Interacts with ubiquitin-protein ligase UBE3A/E6-AP and thus forms a complex with human TP53. Interacts with human NFX1 and MAGI3. Interacts with human IRF3; this interaction inhibits the establishment of antiviral state. Interacts with human TYK2; this interaction inhibits JAK-STAT activation by interferon alpha. Interacts with host DLG1; this interaction leads to the proteasomal degradation of DLG1.</text>
</comment>
<comment type="subcellular location">
    <subcellularLocation>
        <location evidence="1">Host cytoplasm</location>
    </subcellularLocation>
    <subcellularLocation>
        <location evidence="1">Host nucleus</location>
    </subcellularLocation>
</comment>
<comment type="miscellaneous">
    <text evidence="1">Belongs to the high risk human alphapapillomavirus family. The cancer-causing human papillomavirus E6 protein has a unique carboxy terminal PDZ domain containing substrate.</text>
</comment>
<comment type="similarity">
    <text evidence="2">Belongs to the papillomaviridae E6 protein family.</text>
</comment>
<evidence type="ECO:0000255" key="1">
    <source>
        <dbReference type="HAMAP-Rule" id="MF_04006"/>
    </source>
</evidence>
<evidence type="ECO:0000305" key="2"/>
<feature type="chain" id="PRO_0000133374" description="Protein E6">
    <location>
        <begin position="1"/>
        <end position="149"/>
    </location>
</feature>
<feature type="zinc finger region" evidence="1">
    <location>
        <begin position="30"/>
        <end position="66"/>
    </location>
</feature>
<feature type="zinc finger region" evidence="1">
    <location>
        <begin position="103"/>
        <end position="139"/>
    </location>
</feature>
<feature type="short sequence motif" description="PDZ-binding domain" evidence="1">
    <location>
        <begin position="147"/>
        <end position="149"/>
    </location>
</feature>
<proteinExistence type="inferred from homology"/>
<keyword id="KW-0010">Activator</keyword>
<keyword id="KW-0238">DNA-binding</keyword>
<keyword id="KW-0244">Early protein</keyword>
<keyword id="KW-1035">Host cytoplasm</keyword>
<keyword id="KW-1048">Host nucleus</keyword>
<keyword id="KW-0945">Host-virus interaction</keyword>
<keyword id="KW-1090">Inhibition of host innate immune response by virus</keyword>
<keyword id="KW-1092">Inhibition of host IRF3 by virus</keyword>
<keyword id="KW-1113">Inhibition of host RLR pathway by virus</keyword>
<keyword id="KW-0479">Metal-binding</keyword>
<keyword id="KW-1119">Modulation of host cell apoptosis by virus</keyword>
<keyword id="KW-0553">Oncogene</keyword>
<keyword id="KW-0804">Transcription</keyword>
<keyword id="KW-0805">Transcription regulation</keyword>
<keyword id="KW-0899">Viral immunoevasion</keyword>
<keyword id="KW-0862">Zinc</keyword>
<keyword id="KW-0863">Zinc-finger</keyword>
<gene>
    <name evidence="1" type="primary">E6</name>
</gene>
<sequence length="149" mass="17794">MFQDAEEKPRTLHDLCQALETSVHEIELKCVECKKTLQRSEVYDFVFADLRIVYRDGNPFAVCKVCLRLLSKISEYRHYNYSLYGDTLEQTLKKCLNEILIRCIICQRPLCPQEKKRHVDLNKRFHNISGRWTGRCAVCWRPRRRQTQV</sequence>
<name>VE6_HPV58</name>
<accession>P26555</accession>
<protein>
    <recommendedName>
        <fullName evidence="1">Protein E6</fullName>
    </recommendedName>
</protein>
<dbReference type="EMBL" id="D90400">
    <property type="protein sequence ID" value="BAA31845.1"/>
    <property type="molecule type" value="Genomic_DNA"/>
</dbReference>
<dbReference type="PIR" id="E36779">
    <property type="entry name" value="W6WL58"/>
</dbReference>
<dbReference type="SMR" id="P26555"/>
<dbReference type="IntAct" id="P26555">
    <property type="interactions" value="2"/>
</dbReference>
<dbReference type="MINT" id="P26555"/>
<dbReference type="Proteomes" id="UP000007668">
    <property type="component" value="Genome"/>
</dbReference>
<dbReference type="GO" id="GO:0030430">
    <property type="term" value="C:host cell cytoplasm"/>
    <property type="evidence" value="ECO:0007669"/>
    <property type="project" value="UniProtKB-SubCell"/>
</dbReference>
<dbReference type="GO" id="GO:0042025">
    <property type="term" value="C:host cell nucleus"/>
    <property type="evidence" value="ECO:0007669"/>
    <property type="project" value="UniProtKB-SubCell"/>
</dbReference>
<dbReference type="GO" id="GO:0003677">
    <property type="term" value="F:DNA binding"/>
    <property type="evidence" value="ECO:0007669"/>
    <property type="project" value="UniProtKB-UniRule"/>
</dbReference>
<dbReference type="GO" id="GO:0030165">
    <property type="term" value="F:PDZ domain binding"/>
    <property type="evidence" value="ECO:0007669"/>
    <property type="project" value="UniProtKB-UniRule"/>
</dbReference>
<dbReference type="GO" id="GO:0008270">
    <property type="term" value="F:zinc ion binding"/>
    <property type="evidence" value="ECO:0007669"/>
    <property type="project" value="UniProtKB-KW"/>
</dbReference>
<dbReference type="GO" id="GO:0006351">
    <property type="term" value="P:DNA-templated transcription"/>
    <property type="evidence" value="ECO:0007669"/>
    <property type="project" value="UniProtKB-UniRule"/>
</dbReference>
<dbReference type="GO" id="GO:0006355">
    <property type="term" value="P:regulation of DNA-templated transcription"/>
    <property type="evidence" value="ECO:0007669"/>
    <property type="project" value="UniProtKB-UniRule"/>
</dbReference>
<dbReference type="GO" id="GO:0052150">
    <property type="term" value="P:symbiont-mediated perturbation of host apoptosis"/>
    <property type="evidence" value="ECO:0007669"/>
    <property type="project" value="UniProtKB-KW"/>
</dbReference>
<dbReference type="GO" id="GO:0039648">
    <property type="term" value="P:symbiont-mediated perturbation of host ubiquitin-like protein modification"/>
    <property type="evidence" value="ECO:0007669"/>
    <property type="project" value="UniProtKB-UniRule"/>
</dbReference>
<dbReference type="GO" id="GO:0039548">
    <property type="term" value="P:symbiont-mediated suppression of host cytoplasmic pattern recognition receptor signaling pathway via inhibition of IRF3 activity"/>
    <property type="evidence" value="ECO:0007669"/>
    <property type="project" value="UniProtKB-UniRule"/>
</dbReference>
<dbReference type="GO" id="GO:0039502">
    <property type="term" value="P:symbiont-mediated suppression of host type I interferon-mediated signaling pathway"/>
    <property type="evidence" value="ECO:0007669"/>
    <property type="project" value="UniProtKB-UniRule"/>
</dbReference>
<dbReference type="FunFam" id="3.30.240.40:FF:000001">
    <property type="entry name" value="Protein E6"/>
    <property type="match status" value="1"/>
</dbReference>
<dbReference type="FunFam" id="3.30.240.40:FF:000002">
    <property type="entry name" value="Protein E6"/>
    <property type="match status" value="1"/>
</dbReference>
<dbReference type="Gene3D" id="3.30.240.40">
    <property type="entry name" value="E6 early regulatory protein"/>
    <property type="match status" value="2"/>
</dbReference>
<dbReference type="HAMAP" id="MF_04006">
    <property type="entry name" value="HPV_E6"/>
    <property type="match status" value="1"/>
</dbReference>
<dbReference type="InterPro" id="IPR001334">
    <property type="entry name" value="E6"/>
</dbReference>
<dbReference type="InterPro" id="IPR038575">
    <property type="entry name" value="E6_sf"/>
</dbReference>
<dbReference type="Pfam" id="PF00518">
    <property type="entry name" value="E6"/>
    <property type="match status" value="1"/>
</dbReference>
<dbReference type="SUPFAM" id="SSF161229">
    <property type="entry name" value="E6 C-terminal domain-like"/>
    <property type="match status" value="2"/>
</dbReference>
<organism>
    <name type="scientific">Human papillomavirus 58</name>
    <dbReference type="NCBI Taxonomy" id="10598"/>
    <lineage>
        <taxon>Viruses</taxon>
        <taxon>Monodnaviria</taxon>
        <taxon>Shotokuvirae</taxon>
        <taxon>Cossaviricota</taxon>
        <taxon>Papovaviricetes</taxon>
        <taxon>Zurhausenvirales</taxon>
        <taxon>Papillomaviridae</taxon>
        <taxon>Firstpapillomavirinae</taxon>
        <taxon>Alphapapillomavirus</taxon>
        <taxon>Alphapapillomavirus 9</taxon>
    </lineage>
</organism>
<reference key="1">
    <citation type="journal article" date="1991" name="Virology">
        <title>Human papillomavirus type 58 DNA sequence.</title>
        <authorList>
            <person name="Kirii Y."/>
            <person name="Iwamoto S."/>
            <person name="Matsukura T."/>
        </authorList>
    </citation>
    <scope>NUCLEOTIDE SEQUENCE [GENOMIC DNA]</scope>
</reference>
<organismHost>
    <name type="scientific">Homo sapiens</name>
    <name type="common">Human</name>
    <dbReference type="NCBI Taxonomy" id="9606"/>
</organismHost>